<gene>
    <name evidence="9" type="primary">epr1</name>
    <name evidence="8" type="synonym">mug185</name>
    <name type="ORF">SPAC6B12.08</name>
</gene>
<reference key="1">
    <citation type="journal article" date="2002" name="Nature">
        <title>The genome sequence of Schizosaccharomyces pombe.</title>
        <authorList>
            <person name="Wood V."/>
            <person name="Gwilliam R."/>
            <person name="Rajandream M.A."/>
            <person name="Lyne M.H."/>
            <person name="Lyne R."/>
            <person name="Stewart A."/>
            <person name="Sgouros J.G."/>
            <person name="Peat N."/>
            <person name="Hayles J."/>
            <person name="Baker S.G."/>
            <person name="Basham D."/>
            <person name="Bowman S."/>
            <person name="Brooks K."/>
            <person name="Brown D."/>
            <person name="Brown S."/>
            <person name="Chillingworth T."/>
            <person name="Churcher C.M."/>
            <person name="Collins M."/>
            <person name="Connor R."/>
            <person name="Cronin A."/>
            <person name="Davis P."/>
            <person name="Feltwell T."/>
            <person name="Fraser A."/>
            <person name="Gentles S."/>
            <person name="Goble A."/>
            <person name="Hamlin N."/>
            <person name="Harris D.E."/>
            <person name="Hidalgo J."/>
            <person name="Hodgson G."/>
            <person name="Holroyd S."/>
            <person name="Hornsby T."/>
            <person name="Howarth S."/>
            <person name="Huckle E.J."/>
            <person name="Hunt S."/>
            <person name="Jagels K."/>
            <person name="James K.D."/>
            <person name="Jones L."/>
            <person name="Jones M."/>
            <person name="Leather S."/>
            <person name="McDonald S."/>
            <person name="McLean J."/>
            <person name="Mooney P."/>
            <person name="Moule S."/>
            <person name="Mungall K.L."/>
            <person name="Murphy L.D."/>
            <person name="Niblett D."/>
            <person name="Odell C."/>
            <person name="Oliver K."/>
            <person name="O'Neil S."/>
            <person name="Pearson D."/>
            <person name="Quail M.A."/>
            <person name="Rabbinowitsch E."/>
            <person name="Rutherford K.M."/>
            <person name="Rutter S."/>
            <person name="Saunders D."/>
            <person name="Seeger K."/>
            <person name="Sharp S."/>
            <person name="Skelton J."/>
            <person name="Simmonds M.N."/>
            <person name="Squares R."/>
            <person name="Squares S."/>
            <person name="Stevens K."/>
            <person name="Taylor K."/>
            <person name="Taylor R.G."/>
            <person name="Tivey A."/>
            <person name="Walsh S.V."/>
            <person name="Warren T."/>
            <person name="Whitehead S."/>
            <person name="Woodward J.R."/>
            <person name="Volckaert G."/>
            <person name="Aert R."/>
            <person name="Robben J."/>
            <person name="Grymonprez B."/>
            <person name="Weltjens I."/>
            <person name="Vanstreels E."/>
            <person name="Rieger M."/>
            <person name="Schaefer M."/>
            <person name="Mueller-Auer S."/>
            <person name="Gabel C."/>
            <person name="Fuchs M."/>
            <person name="Duesterhoeft A."/>
            <person name="Fritzc C."/>
            <person name="Holzer E."/>
            <person name="Moestl D."/>
            <person name="Hilbert H."/>
            <person name="Borzym K."/>
            <person name="Langer I."/>
            <person name="Beck A."/>
            <person name="Lehrach H."/>
            <person name="Reinhardt R."/>
            <person name="Pohl T.M."/>
            <person name="Eger P."/>
            <person name="Zimmermann W."/>
            <person name="Wedler H."/>
            <person name="Wambutt R."/>
            <person name="Purnelle B."/>
            <person name="Goffeau A."/>
            <person name="Cadieu E."/>
            <person name="Dreano S."/>
            <person name="Gloux S."/>
            <person name="Lelaure V."/>
            <person name="Mottier S."/>
            <person name="Galibert F."/>
            <person name="Aves S.J."/>
            <person name="Xiang Z."/>
            <person name="Hunt C."/>
            <person name="Moore K."/>
            <person name="Hurst S.M."/>
            <person name="Lucas M."/>
            <person name="Rochet M."/>
            <person name="Gaillardin C."/>
            <person name="Tallada V.A."/>
            <person name="Garzon A."/>
            <person name="Thode G."/>
            <person name="Daga R.R."/>
            <person name="Cruzado L."/>
            <person name="Jimenez J."/>
            <person name="Sanchez M."/>
            <person name="del Rey F."/>
            <person name="Benito J."/>
            <person name="Dominguez A."/>
            <person name="Revuelta J.L."/>
            <person name="Moreno S."/>
            <person name="Armstrong J."/>
            <person name="Forsburg S.L."/>
            <person name="Cerutti L."/>
            <person name="Lowe T."/>
            <person name="McCombie W.R."/>
            <person name="Paulsen I."/>
            <person name="Potashkin J."/>
            <person name="Shpakovski G.V."/>
            <person name="Ussery D."/>
            <person name="Barrell B.G."/>
            <person name="Nurse P."/>
        </authorList>
    </citation>
    <scope>NUCLEOTIDE SEQUENCE [LARGE SCALE GENOMIC DNA]</scope>
    <source>
        <strain>972 / ATCC 24843</strain>
    </source>
</reference>
<reference key="2">
    <citation type="journal article" date="2005" name="Curr. Biol.">
        <title>A large-scale screen in S. pombe identifies seven novel genes required for critical meiotic events.</title>
        <authorList>
            <person name="Martin-Castellanos C."/>
            <person name="Blanco M."/>
            <person name="Rozalen A.E."/>
            <person name="Perez-Hidalgo L."/>
            <person name="Garcia A.I."/>
            <person name="Conde F."/>
            <person name="Mata J."/>
            <person name="Ellermeier C."/>
            <person name="Davis L."/>
            <person name="San-Segundo P."/>
            <person name="Smith G.R."/>
            <person name="Moreno S."/>
        </authorList>
    </citation>
    <scope>FUNCTION IN MEIOSIS</scope>
</reference>
<reference key="3">
    <citation type="journal article" date="2006" name="Nat. Biotechnol.">
        <title>ORFeome cloning and global analysis of protein localization in the fission yeast Schizosaccharomyces pombe.</title>
        <authorList>
            <person name="Matsuyama A."/>
            <person name="Arai R."/>
            <person name="Yashiroda Y."/>
            <person name="Shirai A."/>
            <person name="Kamata A."/>
            <person name="Sekido S."/>
            <person name="Kobayashi Y."/>
            <person name="Hashimoto A."/>
            <person name="Hamamoto M."/>
            <person name="Hiraoka Y."/>
            <person name="Horinouchi S."/>
            <person name="Yoshida M."/>
        </authorList>
    </citation>
    <scope>SUBCELLULAR LOCATION [LARGE SCALE ANALYSIS]</scope>
</reference>
<reference key="4">
    <citation type="journal article" date="2008" name="J. Proteome Res.">
        <title>Phosphoproteome analysis of fission yeast.</title>
        <authorList>
            <person name="Wilson-Grady J.T."/>
            <person name="Villen J."/>
            <person name="Gygi S.P."/>
        </authorList>
    </citation>
    <scope>PHOSPHORYLATION [LARGE SCALE ANALYSIS] AT SER-344</scope>
    <scope>IDENTIFICATION BY MASS SPECTROMETRY</scope>
</reference>
<reference key="5">
    <citation type="journal article" date="2020" name="Mol. Cell">
        <title>A UPR-induced soluble ER-phagy receptor acts with VAPs to confer ER stress resistance.</title>
        <authorList>
            <person name="Zhao D."/>
            <person name="Zou C.X."/>
            <person name="Liu X.M."/>
            <person name="Jiang Z.D."/>
            <person name="Yu Z.Q."/>
            <person name="Suo F."/>
            <person name="Du T.Y."/>
            <person name="Dong M.Q."/>
            <person name="He W."/>
            <person name="Du L.L."/>
        </authorList>
    </citation>
    <scope>INTERACTION WITH ATG8; SCS2 AND SCS22</scope>
    <scope>DISRUPTION PHENOTYPE</scope>
    <scope>DOMAIN</scope>
    <scope>MUTAGENESIS OF PHE-352; VAL-355 AND PHE-362</scope>
    <scope>FUNCTION</scope>
    <scope>SUBCELLULAR LOCATION</scope>
    <scope>INDUCTION</scope>
</reference>
<accession>O14213</accession>
<organism>
    <name type="scientific">Schizosaccharomyces pombe (strain 972 / ATCC 24843)</name>
    <name type="common">Fission yeast</name>
    <dbReference type="NCBI Taxonomy" id="284812"/>
    <lineage>
        <taxon>Eukaryota</taxon>
        <taxon>Fungi</taxon>
        <taxon>Dikarya</taxon>
        <taxon>Ascomycota</taxon>
        <taxon>Taphrinomycotina</taxon>
        <taxon>Schizosaccharomycetes</taxon>
        <taxon>Schizosaccharomycetales</taxon>
        <taxon>Schizosaccharomycetaceae</taxon>
        <taxon>Schizosaccharomyces</taxon>
    </lineage>
</organism>
<evidence type="ECO:0000255" key="1">
    <source>
        <dbReference type="PROSITE-ProRule" id="PRU00042"/>
    </source>
</evidence>
<evidence type="ECO:0000255" key="2">
    <source>
        <dbReference type="PROSITE-ProRule" id="PRU00286"/>
    </source>
</evidence>
<evidence type="ECO:0000256" key="3">
    <source>
        <dbReference type="SAM" id="MobiDB-lite"/>
    </source>
</evidence>
<evidence type="ECO:0000269" key="4">
    <source>
    </source>
</evidence>
<evidence type="ECO:0000269" key="5">
    <source>
    </source>
</evidence>
<evidence type="ECO:0000269" key="6">
    <source>
    </source>
</evidence>
<evidence type="ECO:0000269" key="7">
    <source ref="5"/>
</evidence>
<evidence type="ECO:0000303" key="8">
    <source>
    </source>
</evidence>
<evidence type="ECO:0000303" key="9">
    <source ref="5"/>
</evidence>
<dbReference type="EMBL" id="CU329670">
    <property type="protein sequence ID" value="CAB11069.1"/>
    <property type="molecule type" value="Genomic_DNA"/>
</dbReference>
<dbReference type="PIR" id="T39015">
    <property type="entry name" value="T39015"/>
</dbReference>
<dbReference type="RefSeq" id="NP_593763.1">
    <property type="nucleotide sequence ID" value="NM_001019193.2"/>
</dbReference>
<dbReference type="SMR" id="O14213"/>
<dbReference type="BioGRID" id="279379">
    <property type="interactions" value="14"/>
</dbReference>
<dbReference type="FunCoup" id="O14213">
    <property type="interactions" value="771"/>
</dbReference>
<dbReference type="IntAct" id="O14213">
    <property type="interactions" value="1"/>
</dbReference>
<dbReference type="STRING" id="284812.O14213"/>
<dbReference type="iPTMnet" id="O14213"/>
<dbReference type="PaxDb" id="4896-SPAC6B12.08.1"/>
<dbReference type="EnsemblFungi" id="SPAC6B12.08.1">
    <property type="protein sequence ID" value="SPAC6B12.08.1:pep"/>
    <property type="gene ID" value="SPAC6B12.08"/>
</dbReference>
<dbReference type="GeneID" id="2542938"/>
<dbReference type="KEGG" id="spo:2542938"/>
<dbReference type="PomBase" id="SPAC6B12.08">
    <property type="gene designation" value="epr1"/>
</dbReference>
<dbReference type="VEuPathDB" id="FungiDB:SPAC6B12.08"/>
<dbReference type="eggNOG" id="KOG0717">
    <property type="taxonomic scope" value="Eukaryota"/>
</dbReference>
<dbReference type="HOGENOM" id="CLU_062676_0_0_1"/>
<dbReference type="InParanoid" id="O14213"/>
<dbReference type="OMA" id="KWHEKDY"/>
<dbReference type="PhylomeDB" id="O14213"/>
<dbReference type="PRO" id="PR:O14213"/>
<dbReference type="Proteomes" id="UP000002485">
    <property type="component" value="Chromosome I"/>
</dbReference>
<dbReference type="GO" id="GO:0005737">
    <property type="term" value="C:cytoplasm"/>
    <property type="evidence" value="ECO:0000318"/>
    <property type="project" value="GO_Central"/>
</dbReference>
<dbReference type="GO" id="GO:0005783">
    <property type="term" value="C:endoplasmic reticulum"/>
    <property type="evidence" value="ECO:0000269"/>
    <property type="project" value="PomBase"/>
</dbReference>
<dbReference type="GO" id="GO:0000407">
    <property type="term" value="C:phagophore assembly site"/>
    <property type="evidence" value="ECO:0000269"/>
    <property type="project" value="PomBase"/>
</dbReference>
<dbReference type="GO" id="GO:0140506">
    <property type="term" value="F:endoplasmic reticulum-autophagosome adaptor activity"/>
    <property type="evidence" value="ECO:0000353"/>
    <property type="project" value="PomBase"/>
</dbReference>
<dbReference type="GO" id="GO:0003676">
    <property type="term" value="F:nucleic acid binding"/>
    <property type="evidence" value="ECO:0007669"/>
    <property type="project" value="InterPro"/>
</dbReference>
<dbReference type="GO" id="GO:0008270">
    <property type="term" value="F:zinc ion binding"/>
    <property type="evidence" value="ECO:0007669"/>
    <property type="project" value="UniProtKB-KW"/>
</dbReference>
<dbReference type="GO" id="GO:0051321">
    <property type="term" value="P:meiotic cell cycle"/>
    <property type="evidence" value="ECO:0007669"/>
    <property type="project" value="UniProtKB-KW"/>
</dbReference>
<dbReference type="GO" id="GO:0044804">
    <property type="term" value="P:nucleophagy"/>
    <property type="evidence" value="ECO:0000315"/>
    <property type="project" value="PomBase"/>
</dbReference>
<dbReference type="GO" id="GO:0061709">
    <property type="term" value="P:reticulophagy"/>
    <property type="evidence" value="ECO:0000315"/>
    <property type="project" value="PomBase"/>
</dbReference>
<dbReference type="CDD" id="cd06257">
    <property type="entry name" value="DnaJ"/>
    <property type="match status" value="1"/>
</dbReference>
<dbReference type="FunFam" id="1.10.287.110:FF:000223">
    <property type="entry name" value="Meiotically up-regulated gene 185 protein"/>
    <property type="match status" value="1"/>
</dbReference>
<dbReference type="Gene3D" id="3.30.160.60">
    <property type="entry name" value="Classic Zinc Finger"/>
    <property type="match status" value="1"/>
</dbReference>
<dbReference type="Gene3D" id="1.10.287.110">
    <property type="entry name" value="DnaJ domain"/>
    <property type="match status" value="1"/>
</dbReference>
<dbReference type="InterPro" id="IPR051964">
    <property type="entry name" value="Chaperone_stress_response"/>
</dbReference>
<dbReference type="InterPro" id="IPR001623">
    <property type="entry name" value="DnaJ_domain"/>
</dbReference>
<dbReference type="InterPro" id="IPR036869">
    <property type="entry name" value="J_dom_sf"/>
</dbReference>
<dbReference type="InterPro" id="IPR003604">
    <property type="entry name" value="Matrin/U1-like-C_Znf_C2H2"/>
</dbReference>
<dbReference type="InterPro" id="IPR022755">
    <property type="entry name" value="Znf_C2H2_jaz"/>
</dbReference>
<dbReference type="InterPro" id="IPR036236">
    <property type="entry name" value="Znf_C2H2_sf"/>
</dbReference>
<dbReference type="InterPro" id="IPR013087">
    <property type="entry name" value="Znf_C2H2_type"/>
</dbReference>
<dbReference type="InterPro" id="IPR054076">
    <property type="entry name" value="ZUO1-like_ZHD"/>
</dbReference>
<dbReference type="PANTHER" id="PTHR44029">
    <property type="entry name" value="DNAJ HOMOLOG SUBFAMILY C MEMBER 21"/>
    <property type="match status" value="1"/>
</dbReference>
<dbReference type="PANTHER" id="PTHR44029:SF1">
    <property type="entry name" value="DNAJ HOMOLOG SUBFAMILY C MEMBER 21"/>
    <property type="match status" value="1"/>
</dbReference>
<dbReference type="Pfam" id="PF00226">
    <property type="entry name" value="DnaJ"/>
    <property type="match status" value="1"/>
</dbReference>
<dbReference type="Pfam" id="PF12171">
    <property type="entry name" value="zf-C2H2_jaz"/>
    <property type="match status" value="1"/>
</dbReference>
<dbReference type="Pfam" id="PF21884">
    <property type="entry name" value="ZUO1-like_ZHD"/>
    <property type="match status" value="1"/>
</dbReference>
<dbReference type="PRINTS" id="PR00625">
    <property type="entry name" value="JDOMAIN"/>
</dbReference>
<dbReference type="SMART" id="SM00271">
    <property type="entry name" value="DnaJ"/>
    <property type="match status" value="1"/>
</dbReference>
<dbReference type="SMART" id="SM00451">
    <property type="entry name" value="ZnF_U1"/>
    <property type="match status" value="1"/>
</dbReference>
<dbReference type="SUPFAM" id="SSF57667">
    <property type="entry name" value="beta-beta-alpha zinc fingers"/>
    <property type="match status" value="1"/>
</dbReference>
<dbReference type="SUPFAM" id="SSF46565">
    <property type="entry name" value="Chaperone J-domain"/>
    <property type="match status" value="1"/>
</dbReference>
<dbReference type="PROSITE" id="PS50076">
    <property type="entry name" value="DNAJ_2"/>
    <property type="match status" value="1"/>
</dbReference>
<dbReference type="PROSITE" id="PS00028">
    <property type="entry name" value="ZINC_FINGER_C2H2_1"/>
    <property type="match status" value="1"/>
</dbReference>
<dbReference type="PROSITE" id="PS50157">
    <property type="entry name" value="ZINC_FINGER_C2H2_2"/>
    <property type="match status" value="1"/>
</dbReference>
<keyword id="KW-0256">Endoplasmic reticulum</keyword>
<keyword id="KW-0469">Meiosis</keyword>
<keyword id="KW-0479">Metal-binding</keyword>
<keyword id="KW-0597">Phosphoprotein</keyword>
<keyword id="KW-1185">Reference proteome</keyword>
<keyword id="KW-0862">Zinc</keyword>
<keyword id="KW-0863">Zinc-finger</keyword>
<protein>
    <recommendedName>
        <fullName evidence="9">ER-phagy receptor 1</fullName>
    </recommendedName>
    <alternativeName>
        <fullName evidence="8">Meiotically up-regulated gene 185 protein</fullName>
    </alternativeName>
</protein>
<name>EPR1_SCHPO</name>
<proteinExistence type="evidence at protein level"/>
<sequence>MNNPFKDMDCYEILQVNHDSDLQEIKANYRKLALQYHPDRNPGIEDYNEIFSQINAAYNILSNDDKRKWHEKDYLRNQYSVQIEDVLQHLQTIEKIPFESTSAFVERLRQDEKIAGSTDDLPTLGDTTWLWTYAKPIYQKWLRFSTKKSFEWEALYNEEEESDAATRRLMKRQNQRQIQYCIQRYNELVRDLIGKACDLDPRRKNVVKLSDGERYNSLQEASRKQSERDRRQYQETFKNQSIASWTIIDQEETSSDDESLSKEIVNSNPIMCMVCNKNFRSQNQLENHENSKKHKKNLRKMNQEIKKHAKEAQKNAESNKQPEDAPSESPYSNKVSSSDFYTRSFEEIEKTFTFVEISDNEFYTASEDGFLNEDDKLDQD</sequence>
<comment type="function">
    <text evidence="4 7">Reticulophagy receptor required for autophagosomal sequestration of endoplasmic reticulum (ER) membranes during ER stress (Ref.5). Confers resistance to ER stress by promoting the autophagic degradation of the ER (ER-phagy or reticulophagy) (Ref.5). Acts as a bridging molecule to mediate the association between atg8 on the autophagic membrane and the vesicle-associated membrane protein-associated proteins (VAPs) scs2 and scs22 on the ER (Ref.5). May play a role in meiosis (PubMed:16303567).</text>
</comment>
<comment type="subunit">
    <text evidence="7">Interacts (via the AIM motif) with atg8 (Ref.5). Interacts (via the FFAT motif) with the vesicle-associated membrane protein-associated protein (VAP) family proteins scs2 and scs22 (Ref.5).</text>
</comment>
<comment type="subcellular location">
    <subcellularLocation>
        <location evidence="5 7">Endoplasmic reticulum</location>
    </subcellularLocation>
    <subcellularLocation>
        <location evidence="7">Preautophagosomal structure</location>
    </subcellularLocation>
    <text evidence="7">Accumulates at the preautophagosomal structure when autophagy occurs.</text>
</comment>
<comment type="induction">
    <text evidence="7">Expression is up-regulated during ER stress by the unfolded protein response (UPR) regulator ire1.</text>
</comment>
<comment type="domain">
    <text evidence="7">The atg8-interaction motif (AIM) is required for the association with atg8.</text>
</comment>
<comment type="domain">
    <text evidence="7">The FFAT motif (AIM) is required for the association with the vesicle-associated membrane protein-associated proteins (VAPs) scs2 and scs22.</text>
</comment>
<comment type="disruption phenotype">
    <text evidence="7">Does not affect growth neither nitrogen starvation-induced ER-phagy, but abolishes DTT-induced ER-phagy.</text>
</comment>
<feature type="chain" id="PRO_0000278521" description="ER-phagy receptor 1">
    <location>
        <begin position="1"/>
        <end position="380"/>
    </location>
</feature>
<feature type="domain" description="J" evidence="2">
    <location>
        <begin position="9"/>
        <end position="74"/>
    </location>
</feature>
<feature type="zinc finger region" description="C2H2-type" evidence="1">
    <location>
        <begin position="270"/>
        <end position="294"/>
    </location>
</feature>
<feature type="region of interest" description="Disordered" evidence="3">
    <location>
        <begin position="307"/>
        <end position="337"/>
    </location>
</feature>
<feature type="short sequence motif" description="AIM" evidence="7">
    <location>
        <begin position="352"/>
        <end position="355"/>
    </location>
</feature>
<feature type="short sequence motif" description="FFAT" evidence="7">
    <location>
        <begin position="361"/>
        <end position="367"/>
    </location>
</feature>
<feature type="modified residue" description="Phosphoserine" evidence="6">
    <location>
        <position position="344"/>
    </location>
</feature>
<feature type="mutagenesis site" description="Impairs the interaction with atg8." evidence="7">
    <original>F</original>
    <variation>A</variation>
    <location>
        <position position="352"/>
    </location>
</feature>
<feature type="mutagenesis site" description="Impairs the interaction with atg8." evidence="7">
    <original>V</original>
    <variation>A</variation>
    <location>
        <position position="355"/>
    </location>
</feature>
<feature type="mutagenesis site" description="Impairs the interaction with scs2 and scs22 and abolishes the ER localization." evidence="7">
    <original>F</original>
    <variation>A</variation>
    <location>
        <position position="362"/>
    </location>
</feature>